<gene>
    <name evidence="1" type="primary">rpsK</name>
    <name type="ordered locus">Vapar_5047</name>
</gene>
<proteinExistence type="inferred from homology"/>
<accession>C5CQ77</accession>
<organism>
    <name type="scientific">Variovorax paradoxus (strain S110)</name>
    <dbReference type="NCBI Taxonomy" id="543728"/>
    <lineage>
        <taxon>Bacteria</taxon>
        <taxon>Pseudomonadati</taxon>
        <taxon>Pseudomonadota</taxon>
        <taxon>Betaproteobacteria</taxon>
        <taxon>Burkholderiales</taxon>
        <taxon>Comamonadaceae</taxon>
        <taxon>Variovorax</taxon>
    </lineage>
</organism>
<reference key="1">
    <citation type="journal article" date="2011" name="J. Bacteriol.">
        <title>Complete genome sequence of the metabolically versatile plant growth-promoting endophyte, Variovorax paradoxus S110.</title>
        <authorList>
            <person name="Han J.I."/>
            <person name="Choi H.K."/>
            <person name="Lee S.W."/>
            <person name="Orwin P.M."/>
            <person name="Kim J."/>
            <person name="Laroe S.L."/>
            <person name="Kim T.G."/>
            <person name="O'Neil J."/>
            <person name="Leadbetter J.R."/>
            <person name="Lee S.Y."/>
            <person name="Hur C.G."/>
            <person name="Spain J.C."/>
            <person name="Ovchinnikova G."/>
            <person name="Goodwin L."/>
            <person name="Han C."/>
        </authorList>
    </citation>
    <scope>NUCLEOTIDE SEQUENCE [LARGE SCALE GENOMIC DNA]</scope>
    <source>
        <strain>S110</strain>
    </source>
</reference>
<evidence type="ECO:0000255" key="1">
    <source>
        <dbReference type="HAMAP-Rule" id="MF_01310"/>
    </source>
</evidence>
<evidence type="ECO:0000305" key="2"/>
<comment type="function">
    <text evidence="1">Located on the platform of the 30S subunit, it bridges several disparate RNA helices of the 16S rRNA. Forms part of the Shine-Dalgarno cleft in the 70S ribosome.</text>
</comment>
<comment type="subunit">
    <text evidence="1">Part of the 30S ribosomal subunit. Interacts with proteins S7 and S18. Binds to IF-3.</text>
</comment>
<comment type="similarity">
    <text evidence="1">Belongs to the universal ribosomal protein uS11 family.</text>
</comment>
<protein>
    <recommendedName>
        <fullName evidence="1">Small ribosomal subunit protein uS11</fullName>
    </recommendedName>
    <alternativeName>
        <fullName evidence="2">30S ribosomal protein S11</fullName>
    </alternativeName>
</protein>
<dbReference type="EMBL" id="CP001635">
    <property type="protein sequence ID" value="ACS21649.1"/>
    <property type="molecule type" value="Genomic_DNA"/>
</dbReference>
<dbReference type="SMR" id="C5CQ77"/>
<dbReference type="STRING" id="543728.Vapar_5047"/>
<dbReference type="KEGG" id="vap:Vapar_5047"/>
<dbReference type="eggNOG" id="COG0100">
    <property type="taxonomic scope" value="Bacteria"/>
</dbReference>
<dbReference type="HOGENOM" id="CLU_072439_5_0_4"/>
<dbReference type="OrthoDB" id="9806415at2"/>
<dbReference type="GO" id="GO:1990904">
    <property type="term" value="C:ribonucleoprotein complex"/>
    <property type="evidence" value="ECO:0007669"/>
    <property type="project" value="UniProtKB-KW"/>
</dbReference>
<dbReference type="GO" id="GO:0005840">
    <property type="term" value="C:ribosome"/>
    <property type="evidence" value="ECO:0007669"/>
    <property type="project" value="UniProtKB-KW"/>
</dbReference>
<dbReference type="GO" id="GO:0019843">
    <property type="term" value="F:rRNA binding"/>
    <property type="evidence" value="ECO:0007669"/>
    <property type="project" value="UniProtKB-UniRule"/>
</dbReference>
<dbReference type="GO" id="GO:0003735">
    <property type="term" value="F:structural constituent of ribosome"/>
    <property type="evidence" value="ECO:0007669"/>
    <property type="project" value="InterPro"/>
</dbReference>
<dbReference type="GO" id="GO:0006412">
    <property type="term" value="P:translation"/>
    <property type="evidence" value="ECO:0007669"/>
    <property type="project" value="UniProtKB-UniRule"/>
</dbReference>
<dbReference type="FunFam" id="3.30.420.80:FF:000001">
    <property type="entry name" value="30S ribosomal protein S11"/>
    <property type="match status" value="1"/>
</dbReference>
<dbReference type="Gene3D" id="3.30.420.80">
    <property type="entry name" value="Ribosomal protein S11"/>
    <property type="match status" value="1"/>
</dbReference>
<dbReference type="HAMAP" id="MF_01310">
    <property type="entry name" value="Ribosomal_uS11"/>
    <property type="match status" value="1"/>
</dbReference>
<dbReference type="InterPro" id="IPR001971">
    <property type="entry name" value="Ribosomal_uS11"/>
</dbReference>
<dbReference type="InterPro" id="IPR019981">
    <property type="entry name" value="Ribosomal_uS11_bac-type"/>
</dbReference>
<dbReference type="InterPro" id="IPR018102">
    <property type="entry name" value="Ribosomal_uS11_CS"/>
</dbReference>
<dbReference type="InterPro" id="IPR036967">
    <property type="entry name" value="Ribosomal_uS11_sf"/>
</dbReference>
<dbReference type="NCBIfam" id="NF003698">
    <property type="entry name" value="PRK05309.1"/>
    <property type="match status" value="1"/>
</dbReference>
<dbReference type="NCBIfam" id="TIGR03632">
    <property type="entry name" value="uS11_bact"/>
    <property type="match status" value="1"/>
</dbReference>
<dbReference type="PANTHER" id="PTHR11759">
    <property type="entry name" value="40S RIBOSOMAL PROTEIN S14/30S RIBOSOMAL PROTEIN S11"/>
    <property type="match status" value="1"/>
</dbReference>
<dbReference type="Pfam" id="PF00411">
    <property type="entry name" value="Ribosomal_S11"/>
    <property type="match status" value="1"/>
</dbReference>
<dbReference type="PIRSF" id="PIRSF002131">
    <property type="entry name" value="Ribosomal_S11"/>
    <property type="match status" value="1"/>
</dbReference>
<dbReference type="SUPFAM" id="SSF53137">
    <property type="entry name" value="Translational machinery components"/>
    <property type="match status" value="1"/>
</dbReference>
<dbReference type="PROSITE" id="PS00054">
    <property type="entry name" value="RIBOSOMAL_S11"/>
    <property type="match status" value="1"/>
</dbReference>
<feature type="chain" id="PRO_1000214379" description="Small ribosomal subunit protein uS11">
    <location>
        <begin position="1"/>
        <end position="134"/>
    </location>
</feature>
<name>RS11_VARPS</name>
<sequence length="134" mass="14142">MAKAPANNAAQRVRKKVRKNVADGIAHVHASFNNTIITITDRQGNALSWASSGGQGFKGSRKSTPFAAQVASEVAGRAAVEQGIKNLDVEIKGPGPGRESSVRALAALGIRINSIADVTPVPHNGCRPQKRRRI</sequence>
<keyword id="KW-0687">Ribonucleoprotein</keyword>
<keyword id="KW-0689">Ribosomal protein</keyword>
<keyword id="KW-0694">RNA-binding</keyword>
<keyword id="KW-0699">rRNA-binding</keyword>